<reference key="1">
    <citation type="submission" date="2006-12" db="EMBL/GenBank/DDBJ databases">
        <title>Complete sequence of chromosome of Mycobacterium sp. KMS.</title>
        <authorList>
            <consortium name="US DOE Joint Genome Institute"/>
            <person name="Copeland A."/>
            <person name="Lucas S."/>
            <person name="Lapidus A."/>
            <person name="Barry K."/>
            <person name="Detter J.C."/>
            <person name="Glavina del Rio T."/>
            <person name="Hammon N."/>
            <person name="Israni S."/>
            <person name="Dalin E."/>
            <person name="Tice H."/>
            <person name="Pitluck S."/>
            <person name="Kiss H."/>
            <person name="Brettin T."/>
            <person name="Bruce D."/>
            <person name="Han C."/>
            <person name="Tapia R."/>
            <person name="Gilna P."/>
            <person name="Schmutz J."/>
            <person name="Larimer F."/>
            <person name="Land M."/>
            <person name="Hauser L."/>
            <person name="Kyrpides N."/>
            <person name="Mikhailova N."/>
            <person name="Miller C.D."/>
            <person name="Richardson P."/>
        </authorList>
    </citation>
    <scope>NUCLEOTIDE SEQUENCE [LARGE SCALE GENOMIC DNA]</scope>
    <source>
        <strain>KMS</strain>
    </source>
</reference>
<accession>A1UDA2</accession>
<gene>
    <name evidence="1" type="primary">nuoC</name>
    <name type="ordered locus">Mkms_1602</name>
</gene>
<dbReference type="EC" id="7.1.1.-" evidence="1"/>
<dbReference type="EMBL" id="CP000518">
    <property type="protein sequence ID" value="ABL90810.1"/>
    <property type="molecule type" value="Genomic_DNA"/>
</dbReference>
<dbReference type="SMR" id="A1UDA2"/>
<dbReference type="STRING" id="189918.Mkms_1602"/>
<dbReference type="KEGG" id="mkm:Mkms_1602"/>
<dbReference type="HOGENOM" id="CLU_042628_4_0_11"/>
<dbReference type="OrthoDB" id="9803286at2"/>
<dbReference type="GO" id="GO:0005886">
    <property type="term" value="C:plasma membrane"/>
    <property type="evidence" value="ECO:0007669"/>
    <property type="project" value="UniProtKB-SubCell"/>
</dbReference>
<dbReference type="GO" id="GO:0008137">
    <property type="term" value="F:NADH dehydrogenase (ubiquinone) activity"/>
    <property type="evidence" value="ECO:0007669"/>
    <property type="project" value="InterPro"/>
</dbReference>
<dbReference type="GO" id="GO:0050136">
    <property type="term" value="F:NADH:ubiquinone reductase (non-electrogenic) activity"/>
    <property type="evidence" value="ECO:0007669"/>
    <property type="project" value="UniProtKB-UniRule"/>
</dbReference>
<dbReference type="GO" id="GO:0048038">
    <property type="term" value="F:quinone binding"/>
    <property type="evidence" value="ECO:0007669"/>
    <property type="project" value="UniProtKB-KW"/>
</dbReference>
<dbReference type="Gene3D" id="3.30.460.80">
    <property type="entry name" value="NADH:ubiquinone oxidoreductase, 30kDa subunit"/>
    <property type="match status" value="1"/>
</dbReference>
<dbReference type="HAMAP" id="MF_01357">
    <property type="entry name" value="NDH1_NuoC"/>
    <property type="match status" value="1"/>
</dbReference>
<dbReference type="InterPro" id="IPR010218">
    <property type="entry name" value="NADH_DH_suC"/>
</dbReference>
<dbReference type="InterPro" id="IPR037232">
    <property type="entry name" value="NADH_quin_OxRdtase_su_C/D-like"/>
</dbReference>
<dbReference type="InterPro" id="IPR001268">
    <property type="entry name" value="NADH_UbQ_OxRdtase_30kDa_su"/>
</dbReference>
<dbReference type="NCBIfam" id="TIGR01961">
    <property type="entry name" value="NuoC_fam"/>
    <property type="match status" value="1"/>
</dbReference>
<dbReference type="NCBIfam" id="NF005856">
    <property type="entry name" value="PRK07785.1"/>
    <property type="match status" value="1"/>
</dbReference>
<dbReference type="PANTHER" id="PTHR10884:SF14">
    <property type="entry name" value="NADH DEHYDROGENASE [UBIQUINONE] IRON-SULFUR PROTEIN 3, MITOCHONDRIAL"/>
    <property type="match status" value="1"/>
</dbReference>
<dbReference type="PANTHER" id="PTHR10884">
    <property type="entry name" value="NADH DEHYDROGENASE UBIQUINONE IRON-SULFUR PROTEIN 3"/>
    <property type="match status" value="1"/>
</dbReference>
<dbReference type="Pfam" id="PF00329">
    <property type="entry name" value="Complex1_30kDa"/>
    <property type="match status" value="1"/>
</dbReference>
<dbReference type="SUPFAM" id="SSF143243">
    <property type="entry name" value="Nqo5-like"/>
    <property type="match status" value="1"/>
</dbReference>
<sequence length="231" mass="25350">MTEANGTTGGGAGDPEVIDVRRGMFGAKGSGDTSGYGRLIRSVALPGGSPRPYGGHFDEVVDALAAALGQDLYDASVERIVVYRDELTLEIARARLPVVAKTLRDDAALRFELCLGVSGVHYPGDAGRELHAAYPLMSITHNRRIRLEVAAPDDDPHIPSLFSVYPTTDWHERETYDFFGIIFDGHPSLTRIEMPDDWVGHPQRKDYPLGGIPVEYHGARIPPPDERRAYN</sequence>
<name>NUOC_MYCSK</name>
<feature type="chain" id="PRO_0000358139" description="NADH-quinone oxidoreductase subunit C">
    <location>
        <begin position="1"/>
        <end position="231"/>
    </location>
</feature>
<comment type="function">
    <text evidence="1">NDH-1 shuttles electrons from NADH, via FMN and iron-sulfur (Fe-S) centers, to quinones in the respiratory chain. The immediate electron acceptor for the enzyme in this species is believed to be a menaquinone. Couples the redox reaction to proton translocation (for every two electrons transferred, four hydrogen ions are translocated across the cytoplasmic membrane), and thus conserves the redox energy in a proton gradient.</text>
</comment>
<comment type="catalytic activity">
    <reaction evidence="1">
        <text>a quinone + NADH + 5 H(+)(in) = a quinol + NAD(+) + 4 H(+)(out)</text>
        <dbReference type="Rhea" id="RHEA:57888"/>
        <dbReference type="ChEBI" id="CHEBI:15378"/>
        <dbReference type="ChEBI" id="CHEBI:24646"/>
        <dbReference type="ChEBI" id="CHEBI:57540"/>
        <dbReference type="ChEBI" id="CHEBI:57945"/>
        <dbReference type="ChEBI" id="CHEBI:132124"/>
    </reaction>
</comment>
<comment type="subunit">
    <text evidence="1">NDH-1 is composed of 14 different subunits. Subunits NuoB, C, D, E, F, and G constitute the peripheral sector of the complex.</text>
</comment>
<comment type="subcellular location">
    <subcellularLocation>
        <location evidence="1">Cell membrane</location>
        <topology evidence="1">Peripheral membrane protein</topology>
        <orientation evidence="1">Cytoplasmic side</orientation>
    </subcellularLocation>
</comment>
<comment type="similarity">
    <text evidence="1">Belongs to the complex I 30 kDa subunit family.</text>
</comment>
<protein>
    <recommendedName>
        <fullName evidence="1">NADH-quinone oxidoreductase subunit C</fullName>
        <ecNumber evidence="1">7.1.1.-</ecNumber>
    </recommendedName>
    <alternativeName>
        <fullName evidence="1">NADH dehydrogenase I subunit C</fullName>
    </alternativeName>
    <alternativeName>
        <fullName evidence="1">NDH-1 subunit C</fullName>
    </alternativeName>
</protein>
<evidence type="ECO:0000255" key="1">
    <source>
        <dbReference type="HAMAP-Rule" id="MF_01357"/>
    </source>
</evidence>
<keyword id="KW-1003">Cell membrane</keyword>
<keyword id="KW-0472">Membrane</keyword>
<keyword id="KW-0520">NAD</keyword>
<keyword id="KW-0874">Quinone</keyword>
<keyword id="KW-1278">Translocase</keyword>
<keyword id="KW-0813">Transport</keyword>
<organism>
    <name type="scientific">Mycobacterium sp. (strain KMS)</name>
    <dbReference type="NCBI Taxonomy" id="189918"/>
    <lineage>
        <taxon>Bacteria</taxon>
        <taxon>Bacillati</taxon>
        <taxon>Actinomycetota</taxon>
        <taxon>Actinomycetes</taxon>
        <taxon>Mycobacteriales</taxon>
        <taxon>Mycobacteriaceae</taxon>
        <taxon>Mycobacterium</taxon>
    </lineage>
</organism>
<proteinExistence type="inferred from homology"/>